<reference key="1">
    <citation type="journal article" date="1999" name="Mol. Phylogenet. Evol.">
        <title>Systematic relationships within the dasyurid marsupial tribe Sminthopsini -- a multigene approach.</title>
        <authorList>
            <person name="Blacket M.J."/>
            <person name="Krajewski C."/>
            <person name="Labrinidis A."/>
            <person name="Cambron B."/>
            <person name="Cooper S."/>
            <person name="Westerman M."/>
        </authorList>
    </citation>
    <scope>NUCLEOTIDE SEQUENCE [GENOMIC DNA]</scope>
</reference>
<dbReference type="EMBL" id="AF088920">
    <property type="protein sequence ID" value="AAD38430.1"/>
    <property type="molecule type" value="Genomic_DNA"/>
</dbReference>
<dbReference type="SMR" id="Q9XP88"/>
<dbReference type="GO" id="GO:0005743">
    <property type="term" value="C:mitochondrial inner membrane"/>
    <property type="evidence" value="ECO:0007669"/>
    <property type="project" value="UniProtKB-SubCell"/>
</dbReference>
<dbReference type="GO" id="GO:0045275">
    <property type="term" value="C:respiratory chain complex III"/>
    <property type="evidence" value="ECO:0007669"/>
    <property type="project" value="InterPro"/>
</dbReference>
<dbReference type="GO" id="GO:0046872">
    <property type="term" value="F:metal ion binding"/>
    <property type="evidence" value="ECO:0007669"/>
    <property type="project" value="UniProtKB-KW"/>
</dbReference>
<dbReference type="GO" id="GO:0008121">
    <property type="term" value="F:ubiquinol-cytochrome-c reductase activity"/>
    <property type="evidence" value="ECO:0007669"/>
    <property type="project" value="InterPro"/>
</dbReference>
<dbReference type="GO" id="GO:0006122">
    <property type="term" value="P:mitochondrial electron transport, ubiquinol to cytochrome c"/>
    <property type="evidence" value="ECO:0007669"/>
    <property type="project" value="TreeGrafter"/>
</dbReference>
<dbReference type="CDD" id="cd00290">
    <property type="entry name" value="cytochrome_b_C"/>
    <property type="match status" value="1"/>
</dbReference>
<dbReference type="CDD" id="cd00284">
    <property type="entry name" value="Cytochrome_b_N"/>
    <property type="match status" value="1"/>
</dbReference>
<dbReference type="FunFam" id="1.20.810.10:FF:000002">
    <property type="entry name" value="Cytochrome b"/>
    <property type="match status" value="1"/>
</dbReference>
<dbReference type="Gene3D" id="1.20.810.10">
    <property type="entry name" value="Cytochrome Bc1 Complex, Chain C"/>
    <property type="match status" value="1"/>
</dbReference>
<dbReference type="InterPro" id="IPR005798">
    <property type="entry name" value="Cyt_b/b6_C"/>
</dbReference>
<dbReference type="InterPro" id="IPR036150">
    <property type="entry name" value="Cyt_b/b6_C_sf"/>
</dbReference>
<dbReference type="InterPro" id="IPR005797">
    <property type="entry name" value="Cyt_b/b6_N"/>
</dbReference>
<dbReference type="InterPro" id="IPR027387">
    <property type="entry name" value="Cytb/b6-like_sf"/>
</dbReference>
<dbReference type="InterPro" id="IPR030689">
    <property type="entry name" value="Cytochrome_b"/>
</dbReference>
<dbReference type="InterPro" id="IPR048260">
    <property type="entry name" value="Cytochrome_b_C_euk/bac"/>
</dbReference>
<dbReference type="InterPro" id="IPR048259">
    <property type="entry name" value="Cytochrome_b_N_euk/bac"/>
</dbReference>
<dbReference type="InterPro" id="IPR016174">
    <property type="entry name" value="Di-haem_cyt_TM"/>
</dbReference>
<dbReference type="PANTHER" id="PTHR19271">
    <property type="entry name" value="CYTOCHROME B"/>
    <property type="match status" value="1"/>
</dbReference>
<dbReference type="PANTHER" id="PTHR19271:SF16">
    <property type="entry name" value="CYTOCHROME B"/>
    <property type="match status" value="1"/>
</dbReference>
<dbReference type="Pfam" id="PF00032">
    <property type="entry name" value="Cytochrom_B_C"/>
    <property type="match status" value="1"/>
</dbReference>
<dbReference type="Pfam" id="PF00033">
    <property type="entry name" value="Cytochrome_B"/>
    <property type="match status" value="1"/>
</dbReference>
<dbReference type="PIRSF" id="PIRSF038885">
    <property type="entry name" value="COB"/>
    <property type="match status" value="1"/>
</dbReference>
<dbReference type="SUPFAM" id="SSF81648">
    <property type="entry name" value="a domain/subunit of cytochrome bc1 complex (Ubiquinol-cytochrome c reductase)"/>
    <property type="match status" value="1"/>
</dbReference>
<dbReference type="SUPFAM" id="SSF81342">
    <property type="entry name" value="Transmembrane di-heme cytochromes"/>
    <property type="match status" value="1"/>
</dbReference>
<dbReference type="PROSITE" id="PS51003">
    <property type="entry name" value="CYTB_CTER"/>
    <property type="match status" value="1"/>
</dbReference>
<dbReference type="PROSITE" id="PS51002">
    <property type="entry name" value="CYTB_NTER"/>
    <property type="match status" value="1"/>
</dbReference>
<organism>
    <name type="scientific">Sminthopsis archeri</name>
    <name type="common">Chestnut dunnart</name>
    <dbReference type="NCBI Taxonomy" id="90756"/>
    <lineage>
        <taxon>Eukaryota</taxon>
        <taxon>Metazoa</taxon>
        <taxon>Chordata</taxon>
        <taxon>Craniata</taxon>
        <taxon>Vertebrata</taxon>
        <taxon>Euteleostomi</taxon>
        <taxon>Mammalia</taxon>
        <taxon>Metatheria</taxon>
        <taxon>Dasyuromorphia</taxon>
        <taxon>Dasyuridae</taxon>
        <taxon>Sminthopsis</taxon>
    </lineage>
</organism>
<evidence type="ECO:0000250" key="1"/>
<evidence type="ECO:0000250" key="2">
    <source>
        <dbReference type="UniProtKB" id="P00157"/>
    </source>
</evidence>
<evidence type="ECO:0000255" key="3">
    <source>
        <dbReference type="PROSITE-ProRule" id="PRU00967"/>
    </source>
</evidence>
<evidence type="ECO:0000255" key="4">
    <source>
        <dbReference type="PROSITE-ProRule" id="PRU00968"/>
    </source>
</evidence>
<feature type="chain" id="PRO_0000061541" description="Cytochrome b">
    <location>
        <begin position="1"/>
        <end position="381"/>
    </location>
</feature>
<feature type="transmembrane region" description="Helical" evidence="2">
    <location>
        <begin position="33"/>
        <end position="53"/>
    </location>
</feature>
<feature type="transmembrane region" description="Helical" evidence="2">
    <location>
        <begin position="77"/>
        <end position="98"/>
    </location>
</feature>
<feature type="transmembrane region" description="Helical" evidence="2">
    <location>
        <begin position="113"/>
        <end position="133"/>
    </location>
</feature>
<feature type="transmembrane region" description="Helical" evidence="2">
    <location>
        <begin position="178"/>
        <end position="198"/>
    </location>
</feature>
<feature type="transmembrane region" description="Helical" evidence="2">
    <location>
        <begin position="226"/>
        <end position="246"/>
    </location>
</feature>
<feature type="transmembrane region" description="Helical" evidence="2">
    <location>
        <begin position="288"/>
        <end position="308"/>
    </location>
</feature>
<feature type="transmembrane region" description="Helical" evidence="2">
    <location>
        <begin position="320"/>
        <end position="340"/>
    </location>
</feature>
<feature type="transmembrane region" description="Helical" evidence="2">
    <location>
        <begin position="347"/>
        <end position="367"/>
    </location>
</feature>
<feature type="binding site" description="axial binding residue" evidence="2">
    <location>
        <position position="83"/>
    </location>
    <ligand>
        <name>heme b</name>
        <dbReference type="ChEBI" id="CHEBI:60344"/>
        <label>b562</label>
    </ligand>
    <ligandPart>
        <name>Fe</name>
        <dbReference type="ChEBI" id="CHEBI:18248"/>
    </ligandPart>
</feature>
<feature type="binding site" description="axial binding residue" evidence="2">
    <location>
        <position position="97"/>
    </location>
    <ligand>
        <name>heme b</name>
        <dbReference type="ChEBI" id="CHEBI:60344"/>
        <label>b566</label>
    </ligand>
    <ligandPart>
        <name>Fe</name>
        <dbReference type="ChEBI" id="CHEBI:18248"/>
    </ligandPart>
</feature>
<feature type="binding site" description="axial binding residue" evidence="2">
    <location>
        <position position="182"/>
    </location>
    <ligand>
        <name>heme b</name>
        <dbReference type="ChEBI" id="CHEBI:60344"/>
        <label>b562</label>
    </ligand>
    <ligandPart>
        <name>Fe</name>
        <dbReference type="ChEBI" id="CHEBI:18248"/>
    </ligandPart>
</feature>
<feature type="binding site" description="axial binding residue" evidence="2">
    <location>
        <position position="196"/>
    </location>
    <ligand>
        <name>heme b</name>
        <dbReference type="ChEBI" id="CHEBI:60344"/>
        <label>b566</label>
    </ligand>
    <ligandPart>
        <name>Fe</name>
        <dbReference type="ChEBI" id="CHEBI:18248"/>
    </ligandPart>
</feature>
<feature type="binding site" evidence="2">
    <location>
        <position position="201"/>
    </location>
    <ligand>
        <name>a ubiquinone</name>
        <dbReference type="ChEBI" id="CHEBI:16389"/>
    </ligand>
</feature>
<comment type="function">
    <text evidence="2">Component of the ubiquinol-cytochrome c reductase complex (complex III or cytochrome b-c1 complex) that is part of the mitochondrial respiratory chain. The b-c1 complex mediates electron transfer from ubiquinol to cytochrome c. Contributes to the generation of a proton gradient across the mitochondrial membrane that is then used for ATP synthesis.</text>
</comment>
<comment type="cofactor">
    <cofactor evidence="2">
        <name>heme b</name>
        <dbReference type="ChEBI" id="CHEBI:60344"/>
    </cofactor>
    <text evidence="2">Binds 2 heme b groups non-covalently.</text>
</comment>
<comment type="subunit">
    <text evidence="2">The cytochrome bc1 complex contains 11 subunits: 3 respiratory subunits (MT-CYB, CYC1 and UQCRFS1), 2 core proteins (UQCRC1 and UQCRC2) and 6 low-molecular weight proteins (UQCRH/QCR6, UQCRB/QCR7, UQCRQ/QCR8, UQCR10/QCR9, UQCR11/QCR10 and a cleavage product of UQCRFS1). This cytochrome bc1 complex then forms a dimer.</text>
</comment>
<comment type="subcellular location">
    <subcellularLocation>
        <location evidence="2">Mitochondrion inner membrane</location>
        <topology evidence="2">Multi-pass membrane protein</topology>
    </subcellularLocation>
</comment>
<comment type="miscellaneous">
    <text evidence="1">Heme 1 (or BL or b562) is low-potential and absorbs at about 562 nm, and heme 2 (or BH or b566) is high-potential and absorbs at about 566 nm.</text>
</comment>
<comment type="similarity">
    <text evidence="3 4">Belongs to the cytochrome b family.</text>
</comment>
<comment type="caution">
    <text evidence="2">The full-length protein contains only eight transmembrane helices, not nine as predicted by bioinformatics tools.</text>
</comment>
<sequence length="381" mass="42771">MINLRKTHPLMKIINHSFIDLPAPSNISAWWNFGSLLGVCLVIQILTGLFLAMHYTSDTLTAFSSVAHICRDVNYGWLIRNLHANGASMFFMCLFLHVGRGIYYGSYLYKETWNIGVILLLTVMATAFVGYVLPWGQMSFWGATVITNLLSAIPYIGTTLAEWIWGGFAVDKATLTRFFAFHFILPFIIMALVMVHLLFLHETGSNNPSGINPDSDKIPFHPYYTIKDALGLMILLLVLLSLALFSPDSLGDPDNFSPANPLNTPPHIKPEWYFLFAYAILRSIPNKLGGVLALLASILILLIIPLLHTANQRSMMFRPVSQTLFWILTANLITLTWIGGQPVEQPFIIIGQLASILYFTLILVLMPLAGMFENYMLEPKR</sequence>
<name>CYB_SMIAR</name>
<protein>
    <recommendedName>
        <fullName>Cytochrome b</fullName>
    </recommendedName>
    <alternativeName>
        <fullName>Complex III subunit 3</fullName>
    </alternativeName>
    <alternativeName>
        <fullName>Complex III subunit III</fullName>
    </alternativeName>
    <alternativeName>
        <fullName>Cytochrome b-c1 complex subunit 3</fullName>
    </alternativeName>
    <alternativeName>
        <fullName>Ubiquinol-cytochrome-c reductase complex cytochrome b subunit</fullName>
    </alternativeName>
</protein>
<keyword id="KW-0249">Electron transport</keyword>
<keyword id="KW-0349">Heme</keyword>
<keyword id="KW-0408">Iron</keyword>
<keyword id="KW-0472">Membrane</keyword>
<keyword id="KW-0479">Metal-binding</keyword>
<keyword id="KW-0496">Mitochondrion</keyword>
<keyword id="KW-0999">Mitochondrion inner membrane</keyword>
<keyword id="KW-0679">Respiratory chain</keyword>
<keyword id="KW-0812">Transmembrane</keyword>
<keyword id="KW-1133">Transmembrane helix</keyword>
<keyword id="KW-0813">Transport</keyword>
<keyword id="KW-0830">Ubiquinone</keyword>
<geneLocation type="mitochondrion"/>
<gene>
    <name type="primary">MT-CYB</name>
    <name type="synonym">COB</name>
    <name type="synonym">CYTB</name>
    <name type="synonym">MTCYB</name>
</gene>
<proteinExistence type="inferred from homology"/>
<accession>Q9XP88</accession>